<dbReference type="EMBL" id="CP000878">
    <property type="protein sequence ID" value="ABX09577.1"/>
    <property type="molecule type" value="Genomic_DNA"/>
</dbReference>
<dbReference type="RefSeq" id="WP_012196198.1">
    <property type="nucleotide sequence ID" value="NC_009976.1"/>
</dbReference>
<dbReference type="SMR" id="A9BCL5"/>
<dbReference type="STRING" id="93059.P9211_16461"/>
<dbReference type="KEGG" id="pmj:P9211_16461"/>
<dbReference type="eggNOG" id="ENOG5033UPE">
    <property type="taxonomic scope" value="Bacteria"/>
</dbReference>
<dbReference type="HOGENOM" id="CLU_092204_1_0_3"/>
<dbReference type="OrthoDB" id="464381at2"/>
<dbReference type="Proteomes" id="UP000000788">
    <property type="component" value="Chromosome"/>
</dbReference>
<dbReference type="GO" id="GO:0009538">
    <property type="term" value="C:photosystem I reaction center"/>
    <property type="evidence" value="ECO:0007669"/>
    <property type="project" value="InterPro"/>
</dbReference>
<dbReference type="GO" id="GO:0031676">
    <property type="term" value="C:plasma membrane-derived thylakoid membrane"/>
    <property type="evidence" value="ECO:0007669"/>
    <property type="project" value="UniProtKB-SubCell"/>
</dbReference>
<dbReference type="GO" id="GO:0015979">
    <property type="term" value="P:photosynthesis"/>
    <property type="evidence" value="ECO:0007669"/>
    <property type="project" value="UniProtKB-UniRule"/>
</dbReference>
<dbReference type="Gene3D" id="1.20.1240.10">
    <property type="entry name" value="Photosystem I PsaL, reaction centre subunit XI"/>
    <property type="match status" value="1"/>
</dbReference>
<dbReference type="HAMAP" id="MF_00447">
    <property type="entry name" value="PSI_PsaL"/>
    <property type="match status" value="1"/>
</dbReference>
<dbReference type="InterPro" id="IPR003757">
    <property type="entry name" value="PSI_PsaL"/>
</dbReference>
<dbReference type="InterPro" id="IPR036592">
    <property type="entry name" value="PSI_PsaL_sf"/>
</dbReference>
<dbReference type="InterPro" id="IPR022980">
    <property type="entry name" value="PSI_suXI"/>
</dbReference>
<dbReference type="NCBIfam" id="NF001925">
    <property type="entry name" value="PRK00704.1-1"/>
    <property type="match status" value="1"/>
</dbReference>
<dbReference type="NCBIfam" id="NF001928">
    <property type="entry name" value="PRK00704.1-5"/>
    <property type="match status" value="1"/>
</dbReference>
<dbReference type="PANTHER" id="PTHR34803">
    <property type="entry name" value="PHOTOSYSTEM I REACTION CENTER SUBUNIT XI, CHLOROPLASTIC"/>
    <property type="match status" value="1"/>
</dbReference>
<dbReference type="PANTHER" id="PTHR34803:SF2">
    <property type="entry name" value="PHOTOSYSTEM I REACTION CENTER SUBUNIT XI, CHLOROPLASTIC"/>
    <property type="match status" value="1"/>
</dbReference>
<dbReference type="Pfam" id="PF02605">
    <property type="entry name" value="PsaL"/>
    <property type="match status" value="1"/>
</dbReference>
<dbReference type="SUPFAM" id="SSF81568">
    <property type="entry name" value="Photosystem I reaction center subunit XI, PsaL"/>
    <property type="match status" value="1"/>
</dbReference>
<accession>A9BCL5</accession>
<evidence type="ECO:0000255" key="1">
    <source>
        <dbReference type="HAMAP-Rule" id="MF_00447"/>
    </source>
</evidence>
<reference key="1">
    <citation type="journal article" date="2007" name="PLoS Genet.">
        <title>Patterns and implications of gene gain and loss in the evolution of Prochlorococcus.</title>
        <authorList>
            <person name="Kettler G.C."/>
            <person name="Martiny A.C."/>
            <person name="Huang K."/>
            <person name="Zucker J."/>
            <person name="Coleman M.L."/>
            <person name="Rodrigue S."/>
            <person name="Chen F."/>
            <person name="Lapidus A."/>
            <person name="Ferriera S."/>
            <person name="Johnson J."/>
            <person name="Steglich C."/>
            <person name="Church G.M."/>
            <person name="Richardson P."/>
            <person name="Chisholm S.W."/>
        </authorList>
    </citation>
    <scope>NUCLEOTIDE SEQUENCE [LARGE SCALE GENOMIC DNA]</scope>
    <source>
        <strain>MIT 9211</strain>
    </source>
</reference>
<feature type="chain" id="PRO_1000192868" description="Photosystem I reaction center subunit XI">
    <location>
        <begin position="1"/>
        <end position="199"/>
    </location>
</feature>
<feature type="transmembrane region" description="Helical" evidence="1">
    <location>
        <begin position="81"/>
        <end position="101"/>
    </location>
</feature>
<feature type="transmembrane region" description="Helical" evidence="1">
    <location>
        <begin position="108"/>
        <end position="128"/>
    </location>
</feature>
<feature type="transmembrane region" description="Helical" evidence="1">
    <location>
        <begin position="165"/>
        <end position="185"/>
    </location>
</feature>
<sequence length="199" mass="21497">MTEFQDPFLKSGEPVKFDKKYIDSTIRPGDIGIADQWAVKPVSDPFVGNLETPVNSGYFTKAFINNLPFYRSGISPNFRGLEVGAAFGYLLYGPFAMTGPLRNTDFALTAGLLSTIGAVHILTALFVLYTAPGKDPNVQPSDCTVENPPTDLFTRTGWTDFTSGFWLGGCGGAVFAWLLCGTLHLDTIMPIVKGVWAAG</sequence>
<proteinExistence type="inferred from homology"/>
<gene>
    <name evidence="1" type="primary">psaL</name>
    <name type="ordered locus">P9211_16461</name>
</gene>
<organism>
    <name type="scientific">Prochlorococcus marinus (strain MIT 9211)</name>
    <dbReference type="NCBI Taxonomy" id="93059"/>
    <lineage>
        <taxon>Bacteria</taxon>
        <taxon>Bacillati</taxon>
        <taxon>Cyanobacteriota</taxon>
        <taxon>Cyanophyceae</taxon>
        <taxon>Synechococcales</taxon>
        <taxon>Prochlorococcaceae</taxon>
        <taxon>Prochlorococcus</taxon>
    </lineage>
</organism>
<protein>
    <recommendedName>
        <fullName evidence="1">Photosystem I reaction center subunit XI</fullName>
    </recommendedName>
    <alternativeName>
        <fullName evidence="1">PSI subunit V</fullName>
    </alternativeName>
    <alternativeName>
        <fullName evidence="1">PSI-L</fullName>
    </alternativeName>
</protein>
<keyword id="KW-0472">Membrane</keyword>
<keyword id="KW-0602">Photosynthesis</keyword>
<keyword id="KW-0603">Photosystem I</keyword>
<keyword id="KW-1185">Reference proteome</keyword>
<keyword id="KW-0793">Thylakoid</keyword>
<keyword id="KW-0812">Transmembrane</keyword>
<keyword id="KW-1133">Transmembrane helix</keyword>
<name>PSAL_PROM4</name>
<comment type="subcellular location">
    <subcellularLocation>
        <location evidence="1">Cellular thylakoid membrane</location>
        <topology evidence="1">Multi-pass membrane protein</topology>
    </subcellularLocation>
</comment>
<comment type="similarity">
    <text evidence="1">Belongs to the PsaL family.</text>
</comment>